<comment type="function">
    <text>May be involved in regulating the redox state of functionally important thiol groups within dynein.</text>
</comment>
<comment type="subunit">
    <text>Consists of at least 3 heavy chains (alpha, beta and gamma), 2 intermediate chains and 8 light chains.</text>
</comment>
<comment type="subcellular location">
    <subcellularLocation>
        <location>Cell projection</location>
        <location>Cilium</location>
        <location>Flagellum</location>
    </subcellularLocation>
    <subcellularLocation>
        <location>Cytoplasm</location>
        <location>Cytoskeleton</location>
        <location>Flagellum axoneme</location>
    </subcellularLocation>
</comment>
<name>DYL5_CHLRE</name>
<accession>Q39592</accession>
<feature type="chain" id="PRO_0000120152" description="Dynein 16 kDa light chain, flagellar outer arm">
    <location>
        <begin position="1"/>
        <end position="156"/>
    </location>
</feature>
<feature type="domain" description="Thioredoxin" evidence="1">
    <location>
        <begin position="2"/>
        <end position="116"/>
    </location>
</feature>
<feature type="disulfide bond" description="Redox-active" evidence="1">
    <location>
        <begin position="37"/>
        <end position="40"/>
    </location>
</feature>
<protein>
    <recommendedName>
        <fullName>Dynein 16 kDa light chain, flagellar outer arm</fullName>
    </recommendedName>
</protein>
<dbReference type="EMBL" id="U43610">
    <property type="protein sequence ID" value="AAB03682.1"/>
    <property type="molecule type" value="Genomic_DNA"/>
</dbReference>
<dbReference type="PIR" id="T08086">
    <property type="entry name" value="T08086"/>
</dbReference>
<dbReference type="RefSeq" id="XP_001696860.1">
    <property type="nucleotide sequence ID" value="XM_001696808.2"/>
</dbReference>
<dbReference type="PDB" id="8GLV">
    <property type="method" value="EM"/>
    <property type="resolution" value="3.10 A"/>
    <property type="chains" value="DO/Dn/Gu/Ls=1-156"/>
</dbReference>
<dbReference type="PDBsum" id="8GLV"/>
<dbReference type="EMDB" id="EMD-40220"/>
<dbReference type="SMR" id="Q39592"/>
<dbReference type="PaxDb" id="3055-EDP00552"/>
<dbReference type="EnsemblPlants" id="PNW75491">
    <property type="protein sequence ID" value="PNW75491"/>
    <property type="gene ID" value="CHLRE_12g528850v5"/>
</dbReference>
<dbReference type="GeneID" id="5722436"/>
<dbReference type="Gramene" id="PNW75491">
    <property type="protein sequence ID" value="PNW75491"/>
    <property type="gene ID" value="CHLRE_12g528850v5"/>
</dbReference>
<dbReference type="KEGG" id="cre:CHLRE_12g528850v5"/>
<dbReference type="eggNOG" id="KOG0907">
    <property type="taxonomic scope" value="Eukaryota"/>
</dbReference>
<dbReference type="HOGENOM" id="CLU_1689206_0_0_1"/>
<dbReference type="OMA" id="HCKAESH"/>
<dbReference type="OrthoDB" id="10263751at2759"/>
<dbReference type="GO" id="GO:0005737">
    <property type="term" value="C:cytoplasm"/>
    <property type="evidence" value="ECO:0007669"/>
    <property type="project" value="UniProtKB-KW"/>
</dbReference>
<dbReference type="GO" id="GO:0030286">
    <property type="term" value="C:dynein complex"/>
    <property type="evidence" value="ECO:0007669"/>
    <property type="project" value="UniProtKB-KW"/>
</dbReference>
<dbReference type="GO" id="GO:0005874">
    <property type="term" value="C:microtubule"/>
    <property type="evidence" value="ECO:0007669"/>
    <property type="project" value="UniProtKB-KW"/>
</dbReference>
<dbReference type="GO" id="GO:0031514">
    <property type="term" value="C:motile cilium"/>
    <property type="evidence" value="ECO:0007669"/>
    <property type="project" value="UniProtKB-SubCell"/>
</dbReference>
<dbReference type="CDD" id="cd02948">
    <property type="entry name" value="TRX_NDPK"/>
    <property type="match status" value="1"/>
</dbReference>
<dbReference type="Gene3D" id="3.40.30.10">
    <property type="entry name" value="Glutaredoxin"/>
    <property type="match status" value="1"/>
</dbReference>
<dbReference type="InterPro" id="IPR036249">
    <property type="entry name" value="Thioredoxin-like_sf"/>
</dbReference>
<dbReference type="InterPro" id="IPR017937">
    <property type="entry name" value="Thioredoxin_CS"/>
</dbReference>
<dbReference type="InterPro" id="IPR013766">
    <property type="entry name" value="Thioredoxin_domain"/>
</dbReference>
<dbReference type="InterPro" id="IPR051766">
    <property type="entry name" value="TXND_domain-containing"/>
</dbReference>
<dbReference type="PANTHER" id="PTHR46135">
    <property type="entry name" value="NME/NM23 FAMILY MEMBER 8"/>
    <property type="match status" value="1"/>
</dbReference>
<dbReference type="PANTHER" id="PTHR46135:SF3">
    <property type="entry name" value="NME_NM23 FAMILY MEMBER 8"/>
    <property type="match status" value="1"/>
</dbReference>
<dbReference type="Pfam" id="PF00085">
    <property type="entry name" value="Thioredoxin"/>
    <property type="match status" value="1"/>
</dbReference>
<dbReference type="SUPFAM" id="SSF52833">
    <property type="entry name" value="Thioredoxin-like"/>
    <property type="match status" value="1"/>
</dbReference>
<dbReference type="PROSITE" id="PS00194">
    <property type="entry name" value="THIOREDOXIN_1"/>
    <property type="match status" value="1"/>
</dbReference>
<dbReference type="PROSITE" id="PS51352">
    <property type="entry name" value="THIOREDOXIN_2"/>
    <property type="match status" value="1"/>
</dbReference>
<organism>
    <name type="scientific">Chlamydomonas reinhardtii</name>
    <name type="common">Chlamydomonas smithii</name>
    <dbReference type="NCBI Taxonomy" id="3055"/>
    <lineage>
        <taxon>Eukaryota</taxon>
        <taxon>Viridiplantae</taxon>
        <taxon>Chlorophyta</taxon>
        <taxon>core chlorophytes</taxon>
        <taxon>Chlorophyceae</taxon>
        <taxon>CS clade</taxon>
        <taxon>Chlamydomonadales</taxon>
        <taxon>Chlamydomonadaceae</taxon>
        <taxon>Chlamydomonas</taxon>
    </lineage>
</organism>
<reference key="1">
    <citation type="journal article" date="1996" name="J. Biol. Chem.">
        <title>Two functional thioredoxins containing redox-senesitive vicinal dithiols from the Chlamydomonas outer dynein arm.</title>
        <authorList>
            <person name="Patel-King R.S."/>
            <person name="Benashski S.E."/>
            <person name="Harrison A."/>
            <person name="King S.M."/>
        </authorList>
    </citation>
    <scope>NUCLEOTIDE SEQUENCE [GENOMIC DNA]</scope>
    <scope>PROTEIN SEQUENCE OF 42-48 AND 114-132</scope>
    <source>
        <strain>1132D</strain>
    </source>
</reference>
<sequence>MAAGLPPVQYSIDTDADLETRLAGKGLKVVEIFSEWCGPCKSVLPTFRRIRLDKDDENALLFLTVCAEKCNFLETAKEHRGKSEPLFLLYRNGQLKARIEGANTPALNQQVLSLTPANADVDDLEENPMYLAKMERERIARGETVKDAKGAKKGKK</sequence>
<proteinExistence type="evidence at protein level"/>
<evidence type="ECO:0000255" key="1">
    <source>
        <dbReference type="PROSITE-ProRule" id="PRU00691"/>
    </source>
</evidence>
<keyword id="KW-0002">3D-structure</keyword>
<keyword id="KW-0966">Cell projection</keyword>
<keyword id="KW-0969">Cilium</keyword>
<keyword id="KW-0963">Cytoplasm</keyword>
<keyword id="KW-0206">Cytoskeleton</keyword>
<keyword id="KW-0903">Direct protein sequencing</keyword>
<keyword id="KW-1015">Disulfide bond</keyword>
<keyword id="KW-0243">Dynein</keyword>
<keyword id="KW-0249">Electron transport</keyword>
<keyword id="KW-0282">Flagellum</keyword>
<keyword id="KW-0493">Microtubule</keyword>
<keyword id="KW-0505">Motor protein</keyword>
<keyword id="KW-0676">Redox-active center</keyword>
<keyword id="KW-0813">Transport</keyword>